<reference key="1">
    <citation type="journal article" date="1999" name="Science">
        <title>Genome sequence of the radioresistant bacterium Deinococcus radiodurans R1.</title>
        <authorList>
            <person name="White O."/>
            <person name="Eisen J.A."/>
            <person name="Heidelberg J.F."/>
            <person name="Hickey E.K."/>
            <person name="Peterson J.D."/>
            <person name="Dodson R.J."/>
            <person name="Haft D.H."/>
            <person name="Gwinn M.L."/>
            <person name="Nelson W.C."/>
            <person name="Richardson D.L."/>
            <person name="Moffat K.S."/>
            <person name="Qin H."/>
            <person name="Jiang L."/>
            <person name="Pamphile W."/>
            <person name="Crosby M."/>
            <person name="Shen M."/>
            <person name="Vamathevan J.J."/>
            <person name="Lam P."/>
            <person name="McDonald L.A."/>
            <person name="Utterback T.R."/>
            <person name="Zalewski C."/>
            <person name="Makarova K.S."/>
            <person name="Aravind L."/>
            <person name="Daly M.J."/>
            <person name="Minton K.W."/>
            <person name="Fleischmann R.D."/>
            <person name="Ketchum K.A."/>
            <person name="Nelson K.E."/>
            <person name="Salzberg S.L."/>
            <person name="Smith H.O."/>
            <person name="Venter J.C."/>
            <person name="Fraser C.M."/>
        </authorList>
    </citation>
    <scope>NUCLEOTIDE SEQUENCE [LARGE SCALE GENOMIC DNA]</scope>
    <source>
        <strain>ATCC 13939 / DSM 20539 / JCM 16871 / CCUG 27074 / LMG 4051 / NBRC 15346 / NCIMB 9279 / VKM B-1422 / R1</strain>
    </source>
</reference>
<reference key="2">
    <citation type="journal article" date="2002" name="Proc. Natl. Acad. Sci. U.S.A.">
        <title>Cloning, expression, and characterization of a nitric oxide synthase protein from Deinococcus radiodurans.</title>
        <authorList>
            <person name="Adak S."/>
            <person name="Bilwes A.M."/>
            <person name="Panda K."/>
            <person name="Hosfield D."/>
            <person name="Aulak K.S."/>
            <person name="McDonald J.F."/>
            <person name="Tainer J.A."/>
            <person name="Getzoff E.D."/>
            <person name="Crane B.R."/>
            <person name="Stuehr D.J."/>
        </authorList>
    </citation>
    <scope>FUNCTION</scope>
    <scope>COFACTOR</scope>
    <scope>SUBUNIT</scope>
    <source>
        <strain>ATCC 13939 / DSM 20539 / JCM 16871 / CCUG 27074 / LMG 4051 / NBRC 15346 / NCIMB 9279 / VKM B-1422 / R1</strain>
    </source>
</reference>
<reference key="3">
    <citation type="journal article" date="2004" name="Proc. Natl. Acad. Sci. U.S.A.">
        <title>An unusual tryptophanyl tRNA synthetase interacts with nitric oxide synthase in Deinococcus radiodurans.</title>
        <authorList>
            <person name="Buddha M.R."/>
            <person name="Keery K.M."/>
            <person name="Crane B.R."/>
        </authorList>
    </citation>
    <scope>INTERACTION WITH TRPS2</scope>
    <scope>ACTIVITY OF THE COMPLEX</scope>
</reference>
<reference key="4">
    <citation type="journal article" date="2004" name="J. Biol. Chem.">
        <title>Regioselective nitration of tryptophan by a complex between bacterial nitric-oxide synthase and tryptophanyl-tRNA synthetase.</title>
        <authorList>
            <person name="Buddha M.R."/>
            <person name="Tao T."/>
            <person name="Parry R.J."/>
            <person name="Crane B.R."/>
        </authorList>
    </citation>
    <scope>NITRATION OF TRYPTOPHAN</scope>
</reference>
<proteinExistence type="evidence at protein level"/>
<keyword id="KW-0349">Heme</keyword>
<keyword id="KW-0408">Iron</keyword>
<keyword id="KW-0479">Metal-binding</keyword>
<keyword id="KW-0560">Oxidoreductase</keyword>
<keyword id="KW-1185">Reference proteome</keyword>
<sequence length="356" mass="40022">MSCPAAAVLTPDMRAFLRRFHEEMGEPGLPARLRAVEEAGLWWPTSAELTWGAKVAWRNSTRCVGRLYWEALSVRDLRELNTAQAVYEALLQHLDDAFCGGHIRPVISVFGPGVRLHNPQLIRYADDPINADFVDKLRRFGWQPRGERFEVLPLLIEVNGRAELFSLPPQAVQEVAITHPVCLGIGELGLRWHALPVISDMHLDIGGLHLPCAFSGWYVQTEIAARDLADVGRYDQLPAVARALGLDTSRERTLWRDRALVELNVAVLHSFDAAGVKLADHHTVTAHHVRFEEREARAGREVRGKWSWLVPPLSPATTPLWSRRYRAREESPRFVRARCPFHTPTVHASTGHAPTG</sequence>
<dbReference type="EC" id="1.14.14.47" evidence="2"/>
<dbReference type="EMBL" id="AE000513">
    <property type="protein sequence ID" value="AAF12132.1"/>
    <property type="molecule type" value="Genomic_DNA"/>
</dbReference>
<dbReference type="PIR" id="B75256">
    <property type="entry name" value="B75256"/>
</dbReference>
<dbReference type="RefSeq" id="NP_296316.1">
    <property type="nucleotide sequence ID" value="NC_001263.1"/>
</dbReference>
<dbReference type="RefSeq" id="WP_010889221.1">
    <property type="nucleotide sequence ID" value="NC_001263.1"/>
</dbReference>
<dbReference type="SMR" id="Q9RR97"/>
<dbReference type="FunCoup" id="Q9RR97">
    <property type="interactions" value="29"/>
</dbReference>
<dbReference type="STRING" id="243230.DR_2597"/>
<dbReference type="PaxDb" id="243230-DR_2597"/>
<dbReference type="EnsemblBacteria" id="AAF12132">
    <property type="protein sequence ID" value="AAF12132"/>
    <property type="gene ID" value="DR_2597"/>
</dbReference>
<dbReference type="GeneID" id="69518850"/>
<dbReference type="KEGG" id="dra:DR_2597"/>
<dbReference type="PATRIC" id="fig|243230.17.peg.2842"/>
<dbReference type="eggNOG" id="COG4362">
    <property type="taxonomic scope" value="Bacteria"/>
</dbReference>
<dbReference type="HOGENOM" id="CLU_040293_0_0_0"/>
<dbReference type="InParanoid" id="Q9RR97"/>
<dbReference type="OrthoDB" id="3398374at2"/>
<dbReference type="Proteomes" id="UP000002524">
    <property type="component" value="Chromosome 1"/>
</dbReference>
<dbReference type="GO" id="GO:0020037">
    <property type="term" value="F:heme binding"/>
    <property type="evidence" value="ECO:0007669"/>
    <property type="project" value="InterPro"/>
</dbReference>
<dbReference type="GO" id="GO:0046872">
    <property type="term" value="F:metal ion binding"/>
    <property type="evidence" value="ECO:0007669"/>
    <property type="project" value="UniProtKB-KW"/>
</dbReference>
<dbReference type="GO" id="GO:0004517">
    <property type="term" value="F:nitric-oxide synthase activity"/>
    <property type="evidence" value="ECO:0000314"/>
    <property type="project" value="UniProtKB"/>
</dbReference>
<dbReference type="GO" id="GO:0006809">
    <property type="term" value="P:nitric oxide biosynthetic process"/>
    <property type="evidence" value="ECO:0000314"/>
    <property type="project" value="UniProtKB"/>
</dbReference>
<dbReference type="CDD" id="cd00794">
    <property type="entry name" value="NOS_oxygenase_prok"/>
    <property type="match status" value="1"/>
</dbReference>
<dbReference type="Gene3D" id="3.90.340.10">
    <property type="entry name" value="Nitric Oxide Synthase, Chain A, domain 1"/>
    <property type="match status" value="1"/>
</dbReference>
<dbReference type="Gene3D" id="3.90.1230.10">
    <property type="entry name" value="Nitric Oxide Synthase, Chain A, domain 3"/>
    <property type="match status" value="1"/>
</dbReference>
<dbReference type="Gene3D" id="3.90.440.10">
    <property type="entry name" value="Nitric Oxide Synthase,Heme Domain,Chain A domain 2"/>
    <property type="match status" value="1"/>
</dbReference>
<dbReference type="InterPro" id="IPR017142">
    <property type="entry name" value="Nitric_oxide_synthase_Oase-su"/>
</dbReference>
<dbReference type="InterPro" id="IPR050607">
    <property type="entry name" value="NOS"/>
</dbReference>
<dbReference type="InterPro" id="IPR044943">
    <property type="entry name" value="NOS_dom_1"/>
</dbReference>
<dbReference type="InterPro" id="IPR044940">
    <property type="entry name" value="NOS_dom_2"/>
</dbReference>
<dbReference type="InterPro" id="IPR044944">
    <property type="entry name" value="NOS_dom_3"/>
</dbReference>
<dbReference type="InterPro" id="IPR004030">
    <property type="entry name" value="NOS_N"/>
</dbReference>
<dbReference type="InterPro" id="IPR036119">
    <property type="entry name" value="NOS_N_sf"/>
</dbReference>
<dbReference type="PANTHER" id="PTHR43410:SF1">
    <property type="entry name" value="NITRIC OXIDE SYNTHASE"/>
    <property type="match status" value="1"/>
</dbReference>
<dbReference type="PANTHER" id="PTHR43410">
    <property type="entry name" value="NITRIC OXIDE SYNTHASE OXYGENASE"/>
    <property type="match status" value="1"/>
</dbReference>
<dbReference type="Pfam" id="PF02898">
    <property type="entry name" value="NO_synthase"/>
    <property type="match status" value="1"/>
</dbReference>
<dbReference type="PIRSF" id="PIRSF037219">
    <property type="entry name" value="NOS_oxygenase"/>
    <property type="match status" value="1"/>
</dbReference>
<dbReference type="SUPFAM" id="SSF56512">
    <property type="entry name" value="Nitric oxide (NO) synthase oxygenase domain"/>
    <property type="match status" value="1"/>
</dbReference>
<dbReference type="PROSITE" id="PS60001">
    <property type="entry name" value="NOS"/>
    <property type="match status" value="1"/>
</dbReference>
<feature type="chain" id="PRO_0000170954" description="Nitric oxide synthase oxygenase">
    <location>
        <begin position="1"/>
        <end position="356"/>
    </location>
</feature>
<feature type="binding site" description="axial binding residue" evidence="1">
    <location>
        <position position="63"/>
    </location>
    <ligand>
        <name>heme</name>
        <dbReference type="ChEBI" id="CHEBI:30413"/>
    </ligand>
    <ligandPart>
        <name>Fe</name>
        <dbReference type="ChEBI" id="CHEBI:18248"/>
    </ligandPart>
</feature>
<gene>
    <name type="primary">nos</name>
    <name type="ordered locus">DR_2597</name>
</gene>
<accession>Q9RR97</accession>
<name>NOSO_DEIRA</name>
<organism>
    <name type="scientific">Deinococcus radiodurans (strain ATCC 13939 / DSM 20539 / JCM 16871 / CCUG 27074 / LMG 4051 / NBRC 15346 / NCIMB 9279 / VKM B-1422 / R1)</name>
    <dbReference type="NCBI Taxonomy" id="243230"/>
    <lineage>
        <taxon>Bacteria</taxon>
        <taxon>Thermotogati</taxon>
        <taxon>Deinococcota</taxon>
        <taxon>Deinococci</taxon>
        <taxon>Deinococcales</taxon>
        <taxon>Deinococcaceae</taxon>
        <taxon>Deinococcus</taxon>
    </lineage>
</organism>
<comment type="function">
    <text evidence="3">Catalyzes the production of nitric oxide. The complex between TrpRS II and nitric oxide synthase oxygenase catalyzes the regioselective nitration of tryptophan at the 4-position.</text>
</comment>
<comment type="catalytic activity">
    <reaction evidence="2">
        <text>3 reduced [flavodoxin] + 2 L-arginine + 4 O2 = 3 oxidized [flavodoxin] + 2 L-citrulline + 2 nitric oxide + 4 H2O + 5 H(+)</text>
        <dbReference type="Rhea" id="RHEA:52324"/>
        <dbReference type="Rhea" id="RHEA-COMP:10622"/>
        <dbReference type="Rhea" id="RHEA-COMP:10623"/>
        <dbReference type="ChEBI" id="CHEBI:15377"/>
        <dbReference type="ChEBI" id="CHEBI:15378"/>
        <dbReference type="ChEBI" id="CHEBI:15379"/>
        <dbReference type="ChEBI" id="CHEBI:16480"/>
        <dbReference type="ChEBI" id="CHEBI:32682"/>
        <dbReference type="ChEBI" id="CHEBI:57618"/>
        <dbReference type="ChEBI" id="CHEBI:57743"/>
        <dbReference type="ChEBI" id="CHEBI:58210"/>
        <dbReference type="EC" id="1.14.14.47"/>
    </reaction>
</comment>
<comment type="cofactor">
    <cofactor evidence="3">
        <name>heme</name>
        <dbReference type="ChEBI" id="CHEBI:30413"/>
    </cofactor>
</comment>
<comment type="cofactor">
    <cofactor evidence="3">
        <name>(6S)-5,6,7,8-tetrahydrofolate</name>
        <dbReference type="ChEBI" id="CHEBI:57453"/>
    </cofactor>
</comment>
<comment type="activity regulation">
    <text>Nitric oxide synthase activity is increased by trpS2.</text>
</comment>
<comment type="subunit">
    <text evidence="3">Homodimer. Forms a complex with trpS2; one homodimer of trpS2 binds one homodimer of nos.</text>
</comment>
<comment type="miscellaneous">
    <text>This protein is similar to the oxygenase domain of eukaryotic nitric oxide synthases but lacks the reductase domain which, in eukaryotes, is responsible for transfer of electrons to the ferric heme during nitric oxide synthesis.</text>
</comment>
<comment type="miscellaneous">
    <text>Affinity for substrate L-arginine is increased by TrpRS II.</text>
</comment>
<comment type="similarity">
    <text evidence="4">Belongs to the NOS family. Bacterial NOS oxygenase subfamily.</text>
</comment>
<protein>
    <recommendedName>
        <fullName>Nitric oxide synthase oxygenase</fullName>
        <ecNumber evidence="2">1.14.14.47</ecNumber>
    </recommendedName>
    <alternativeName>
        <fullName>NOSoxy-like protein</fullName>
    </alternativeName>
</protein>
<evidence type="ECO:0000250" key="1"/>
<evidence type="ECO:0000250" key="2">
    <source>
        <dbReference type="UniProtKB" id="O34453"/>
    </source>
</evidence>
<evidence type="ECO:0000269" key="3">
    <source>
    </source>
</evidence>
<evidence type="ECO:0000305" key="4"/>